<proteinExistence type="inferred from homology"/>
<protein>
    <recommendedName>
        <fullName evidence="1">Pyrimidine/purine nucleoside phosphorylase</fullName>
        <ecNumber evidence="1">2.4.2.1</ecNumber>
        <ecNumber evidence="1">2.4.2.2</ecNumber>
    </recommendedName>
    <alternativeName>
        <fullName evidence="1">Adenosine phosphorylase</fullName>
    </alternativeName>
    <alternativeName>
        <fullName evidence="1">Cytidine phosphorylase</fullName>
    </alternativeName>
    <alternativeName>
        <fullName evidence="1">Guanosine phosphorylase</fullName>
    </alternativeName>
    <alternativeName>
        <fullName evidence="1">Inosine phosphorylase</fullName>
    </alternativeName>
    <alternativeName>
        <fullName evidence="1">Thymidine phosphorylase</fullName>
    </alternativeName>
    <alternativeName>
        <fullName evidence="1">Uridine phosphorylase</fullName>
    </alternativeName>
    <alternativeName>
        <fullName evidence="1">Xanthosine phosphorylase</fullName>
    </alternativeName>
</protein>
<evidence type="ECO:0000255" key="1">
    <source>
        <dbReference type="HAMAP-Rule" id="MF_01537"/>
    </source>
</evidence>
<evidence type="ECO:0000305" key="2"/>
<feature type="chain" id="PRO_0000318556" description="Pyrimidine/purine nucleoside phosphorylase">
    <location>
        <begin position="1"/>
        <end position="94"/>
    </location>
</feature>
<sequence length="94" mass="10107">MLQSNEYFSGKVKSIGFTSSSTGRASVGVMAEGEYAFSTAAPEEMTVVSGALNVLLPGETEWKVYAAGEVFNVPGQSEFHLQVAEPTSYLCRYL</sequence>
<reference key="1">
    <citation type="submission" date="2007-08" db="EMBL/GenBank/DDBJ databases">
        <authorList>
            <consortium name="The Citrobacter koseri Genome Sequencing Project"/>
            <person name="McClelland M."/>
            <person name="Sanderson E.K."/>
            <person name="Porwollik S."/>
            <person name="Spieth J."/>
            <person name="Clifton W.S."/>
            <person name="Latreille P."/>
            <person name="Courtney L."/>
            <person name="Wang C."/>
            <person name="Pepin K."/>
            <person name="Bhonagiri V."/>
            <person name="Nash W."/>
            <person name="Johnson M."/>
            <person name="Thiruvilangam P."/>
            <person name="Wilson R."/>
        </authorList>
    </citation>
    <scope>NUCLEOTIDE SEQUENCE [LARGE SCALE GENOMIC DNA]</scope>
    <source>
        <strain>ATCC BAA-895 / CDC 4225-83 / SGSC4696</strain>
    </source>
</reference>
<keyword id="KW-0328">Glycosyltransferase</keyword>
<keyword id="KW-1185">Reference proteome</keyword>
<keyword id="KW-0808">Transferase</keyword>
<name>PPNP_CITK8</name>
<dbReference type="EC" id="2.4.2.1" evidence="1"/>
<dbReference type="EC" id="2.4.2.2" evidence="1"/>
<dbReference type="EMBL" id="CP000822">
    <property type="protein sequence ID" value="ABV13886.1"/>
    <property type="status" value="ALT_INIT"/>
    <property type="molecule type" value="Genomic_DNA"/>
</dbReference>
<dbReference type="RefSeq" id="WP_024130605.1">
    <property type="nucleotide sequence ID" value="NC_009792.1"/>
</dbReference>
<dbReference type="SMR" id="A8AK73"/>
<dbReference type="STRING" id="290338.CKO_02780"/>
<dbReference type="GeneID" id="45136625"/>
<dbReference type="KEGG" id="cko:CKO_02780"/>
<dbReference type="HOGENOM" id="CLU_157874_0_0_6"/>
<dbReference type="OrthoDB" id="9793848at2"/>
<dbReference type="Proteomes" id="UP000008148">
    <property type="component" value="Chromosome"/>
</dbReference>
<dbReference type="GO" id="GO:0005829">
    <property type="term" value="C:cytosol"/>
    <property type="evidence" value="ECO:0007669"/>
    <property type="project" value="TreeGrafter"/>
</dbReference>
<dbReference type="GO" id="GO:0047975">
    <property type="term" value="F:guanosine phosphorylase activity"/>
    <property type="evidence" value="ECO:0007669"/>
    <property type="project" value="UniProtKB-EC"/>
</dbReference>
<dbReference type="GO" id="GO:0004731">
    <property type="term" value="F:purine-nucleoside phosphorylase activity"/>
    <property type="evidence" value="ECO:0007669"/>
    <property type="project" value="UniProtKB-UniRule"/>
</dbReference>
<dbReference type="GO" id="GO:0009032">
    <property type="term" value="F:thymidine phosphorylase activity"/>
    <property type="evidence" value="ECO:0007669"/>
    <property type="project" value="UniProtKB-EC"/>
</dbReference>
<dbReference type="GO" id="GO:0004850">
    <property type="term" value="F:uridine phosphorylase activity"/>
    <property type="evidence" value="ECO:0007669"/>
    <property type="project" value="UniProtKB-EC"/>
</dbReference>
<dbReference type="CDD" id="cd20296">
    <property type="entry name" value="cupin_PpnP-like"/>
    <property type="match status" value="1"/>
</dbReference>
<dbReference type="FunFam" id="2.60.120.10:FF:000016">
    <property type="entry name" value="Pyrimidine/purine nucleoside phosphorylase"/>
    <property type="match status" value="1"/>
</dbReference>
<dbReference type="Gene3D" id="2.60.120.10">
    <property type="entry name" value="Jelly Rolls"/>
    <property type="match status" value="1"/>
</dbReference>
<dbReference type="HAMAP" id="MF_01537">
    <property type="entry name" value="Nucleos_phosphorylase_PpnP"/>
    <property type="match status" value="1"/>
</dbReference>
<dbReference type="InterPro" id="IPR009664">
    <property type="entry name" value="Ppnp"/>
</dbReference>
<dbReference type="InterPro" id="IPR014710">
    <property type="entry name" value="RmlC-like_jellyroll"/>
</dbReference>
<dbReference type="InterPro" id="IPR011051">
    <property type="entry name" value="RmlC_Cupin_sf"/>
</dbReference>
<dbReference type="NCBIfam" id="NF007875">
    <property type="entry name" value="PRK10579.1"/>
    <property type="match status" value="1"/>
</dbReference>
<dbReference type="PANTHER" id="PTHR36540">
    <property type="entry name" value="PYRIMIDINE/PURINE NUCLEOSIDE PHOSPHORYLASE"/>
    <property type="match status" value="1"/>
</dbReference>
<dbReference type="PANTHER" id="PTHR36540:SF1">
    <property type="entry name" value="PYRIMIDINE_PURINE NUCLEOSIDE PHOSPHORYLASE"/>
    <property type="match status" value="1"/>
</dbReference>
<dbReference type="Pfam" id="PF06865">
    <property type="entry name" value="Ppnp"/>
    <property type="match status" value="1"/>
</dbReference>
<dbReference type="SUPFAM" id="SSF51182">
    <property type="entry name" value="RmlC-like cupins"/>
    <property type="match status" value="1"/>
</dbReference>
<comment type="function">
    <text evidence="1">Catalyzes the phosphorolysis of diverse nucleosides, yielding D-ribose 1-phosphate and the respective free bases. Can use uridine, adenosine, guanosine, cytidine, thymidine, inosine and xanthosine as substrates. Also catalyzes the reverse reactions.</text>
</comment>
<comment type="catalytic activity">
    <reaction evidence="1">
        <text>a purine D-ribonucleoside + phosphate = a purine nucleobase + alpha-D-ribose 1-phosphate</text>
        <dbReference type="Rhea" id="RHEA:19805"/>
        <dbReference type="ChEBI" id="CHEBI:26386"/>
        <dbReference type="ChEBI" id="CHEBI:43474"/>
        <dbReference type="ChEBI" id="CHEBI:57720"/>
        <dbReference type="ChEBI" id="CHEBI:142355"/>
        <dbReference type="EC" id="2.4.2.1"/>
    </reaction>
</comment>
<comment type="catalytic activity">
    <reaction evidence="1">
        <text>adenosine + phosphate = alpha-D-ribose 1-phosphate + adenine</text>
        <dbReference type="Rhea" id="RHEA:27642"/>
        <dbReference type="ChEBI" id="CHEBI:16335"/>
        <dbReference type="ChEBI" id="CHEBI:16708"/>
        <dbReference type="ChEBI" id="CHEBI:43474"/>
        <dbReference type="ChEBI" id="CHEBI:57720"/>
        <dbReference type="EC" id="2.4.2.1"/>
    </reaction>
</comment>
<comment type="catalytic activity">
    <reaction evidence="1">
        <text>cytidine + phosphate = cytosine + alpha-D-ribose 1-phosphate</text>
        <dbReference type="Rhea" id="RHEA:52540"/>
        <dbReference type="ChEBI" id="CHEBI:16040"/>
        <dbReference type="ChEBI" id="CHEBI:17562"/>
        <dbReference type="ChEBI" id="CHEBI:43474"/>
        <dbReference type="ChEBI" id="CHEBI:57720"/>
        <dbReference type="EC" id="2.4.2.2"/>
    </reaction>
</comment>
<comment type="catalytic activity">
    <reaction evidence="1">
        <text>guanosine + phosphate = alpha-D-ribose 1-phosphate + guanine</text>
        <dbReference type="Rhea" id="RHEA:13233"/>
        <dbReference type="ChEBI" id="CHEBI:16235"/>
        <dbReference type="ChEBI" id="CHEBI:16750"/>
        <dbReference type="ChEBI" id="CHEBI:43474"/>
        <dbReference type="ChEBI" id="CHEBI:57720"/>
        <dbReference type="EC" id="2.4.2.1"/>
    </reaction>
</comment>
<comment type="catalytic activity">
    <reaction evidence="1">
        <text>inosine + phosphate = alpha-D-ribose 1-phosphate + hypoxanthine</text>
        <dbReference type="Rhea" id="RHEA:27646"/>
        <dbReference type="ChEBI" id="CHEBI:17368"/>
        <dbReference type="ChEBI" id="CHEBI:17596"/>
        <dbReference type="ChEBI" id="CHEBI:43474"/>
        <dbReference type="ChEBI" id="CHEBI:57720"/>
        <dbReference type="EC" id="2.4.2.1"/>
    </reaction>
</comment>
<comment type="catalytic activity">
    <reaction evidence="1">
        <text>thymidine + phosphate = 2-deoxy-alpha-D-ribose 1-phosphate + thymine</text>
        <dbReference type="Rhea" id="RHEA:16037"/>
        <dbReference type="ChEBI" id="CHEBI:17748"/>
        <dbReference type="ChEBI" id="CHEBI:17821"/>
        <dbReference type="ChEBI" id="CHEBI:43474"/>
        <dbReference type="ChEBI" id="CHEBI:57259"/>
        <dbReference type="EC" id="2.4.2.2"/>
    </reaction>
</comment>
<comment type="catalytic activity">
    <reaction evidence="1">
        <text>uridine + phosphate = alpha-D-ribose 1-phosphate + uracil</text>
        <dbReference type="Rhea" id="RHEA:24388"/>
        <dbReference type="ChEBI" id="CHEBI:16704"/>
        <dbReference type="ChEBI" id="CHEBI:17568"/>
        <dbReference type="ChEBI" id="CHEBI:43474"/>
        <dbReference type="ChEBI" id="CHEBI:57720"/>
        <dbReference type="EC" id="2.4.2.2"/>
    </reaction>
</comment>
<comment type="catalytic activity">
    <reaction evidence="1">
        <text>xanthosine + phosphate = alpha-D-ribose 1-phosphate + xanthine</text>
        <dbReference type="Rhea" id="RHEA:27638"/>
        <dbReference type="ChEBI" id="CHEBI:17712"/>
        <dbReference type="ChEBI" id="CHEBI:18107"/>
        <dbReference type="ChEBI" id="CHEBI:43474"/>
        <dbReference type="ChEBI" id="CHEBI:57720"/>
        <dbReference type="EC" id="2.4.2.1"/>
    </reaction>
</comment>
<comment type="similarity">
    <text evidence="1">Belongs to the nucleoside phosphorylase PpnP family.</text>
</comment>
<comment type="sequence caution" evidence="2">
    <conflict type="erroneous initiation">
        <sequence resource="EMBL-CDS" id="ABV13886"/>
    </conflict>
</comment>
<gene>
    <name evidence="1" type="primary">ppnP</name>
    <name type="ordered locus">CKO_02780</name>
</gene>
<accession>A8AK73</accession>
<organism>
    <name type="scientific">Citrobacter koseri (strain ATCC BAA-895 / CDC 4225-83 / SGSC4696)</name>
    <dbReference type="NCBI Taxonomy" id="290338"/>
    <lineage>
        <taxon>Bacteria</taxon>
        <taxon>Pseudomonadati</taxon>
        <taxon>Pseudomonadota</taxon>
        <taxon>Gammaproteobacteria</taxon>
        <taxon>Enterobacterales</taxon>
        <taxon>Enterobacteriaceae</taxon>
        <taxon>Citrobacter</taxon>
    </lineage>
</organism>